<keyword id="KW-0002">3D-structure</keyword>
<keyword id="KW-0025">Alternative splicing</keyword>
<keyword id="KW-0963">Cytoplasm</keyword>
<keyword id="KW-1267">Proteomics identification</keyword>
<keyword id="KW-1185">Reference proteome</keyword>
<evidence type="ECO:0000256" key="1">
    <source>
        <dbReference type="SAM" id="MobiDB-lite"/>
    </source>
</evidence>
<evidence type="ECO:0000269" key="2">
    <source>
    </source>
</evidence>
<evidence type="ECO:0000269" key="3">
    <source>
    </source>
</evidence>
<evidence type="ECO:0000303" key="4">
    <source ref="9"/>
</evidence>
<evidence type="ECO:0000305" key="5"/>
<evidence type="ECO:0007829" key="6">
    <source>
        <dbReference type="PDB" id="6AVF"/>
    </source>
</evidence>
<protein>
    <recommendedName>
        <fullName>Cancer/testis antigen 1</fullName>
    </recommendedName>
    <alternativeName>
        <fullName>Autoimmunogenic cancer/testis antigen NY-ESO-1</fullName>
    </alternativeName>
    <alternativeName>
        <fullName>Cancer/testis antigen 6.1</fullName>
        <shortName>CT6.1</shortName>
    </alternativeName>
    <alternativeName>
        <fullName>L antigen family member 2</fullName>
        <shortName>LAGE-2</shortName>
    </alternativeName>
</protein>
<name>CTG1B_HUMAN</name>
<dbReference type="EMBL" id="U87459">
    <property type="protein sequence ID" value="AAB49693.1"/>
    <property type="molecule type" value="mRNA"/>
</dbReference>
<dbReference type="EMBL" id="AJ003149">
    <property type="protein sequence ID" value="CAA05908.1"/>
    <property type="molecule type" value="mRNA"/>
</dbReference>
<dbReference type="EMBL" id="AF038567">
    <property type="protein sequence ID" value="AAD05202.1"/>
    <property type="molecule type" value="mRNA"/>
</dbReference>
<dbReference type="EMBL" id="AJ275977">
    <property type="protein sequence ID" value="CAB76943.1"/>
    <property type="molecule type" value="Genomic_DNA"/>
</dbReference>
<dbReference type="EMBL" id="AF277315">
    <property type="protein sequence ID" value="AAL27013.1"/>
    <property type="molecule type" value="Genomic_DNA"/>
</dbReference>
<dbReference type="EMBL" id="AF277315">
    <property type="protein sequence ID" value="AAL27014.1"/>
    <property type="molecule type" value="Genomic_DNA"/>
</dbReference>
<dbReference type="EMBL" id="CH471172">
    <property type="protein sequence ID" value="EAW72673.1"/>
    <property type="molecule type" value="Genomic_DNA"/>
</dbReference>
<dbReference type="EMBL" id="CH471172">
    <property type="protein sequence ID" value="EAW72674.1"/>
    <property type="molecule type" value="Genomic_DNA"/>
</dbReference>
<dbReference type="EMBL" id="BC130362">
    <property type="protein sequence ID" value="AAI30363.1"/>
    <property type="molecule type" value="mRNA"/>
</dbReference>
<dbReference type="EMBL" id="BC130364">
    <property type="protein sequence ID" value="AAI30365.1"/>
    <property type="molecule type" value="mRNA"/>
</dbReference>
<dbReference type="EMBL" id="AJ275978">
    <property type="protein sequence ID" value="CAB76945.1"/>
    <property type="molecule type" value="mRNA"/>
</dbReference>
<dbReference type="CCDS" id="CCDS14758.1">
    <molecule id="P78358-1"/>
</dbReference>
<dbReference type="CCDS" id="CCDS44025.1">
    <molecule id="P78358-1"/>
</dbReference>
<dbReference type="RefSeq" id="NP_001318.1">
    <molecule id="P78358-1"/>
    <property type="nucleotide sequence ID" value="NM_001327.2"/>
</dbReference>
<dbReference type="RefSeq" id="NP_640343.1">
    <molecule id="P78358-1"/>
    <property type="nucleotide sequence ID" value="NM_139250.2"/>
</dbReference>
<dbReference type="PDB" id="1S9W">
    <property type="method" value="X-ray"/>
    <property type="resolution" value="2.20 A"/>
    <property type="chains" value="C=157-165"/>
</dbReference>
<dbReference type="PDB" id="2BNQ">
    <property type="method" value="X-ray"/>
    <property type="resolution" value="1.70 A"/>
    <property type="chains" value="C=157-164"/>
</dbReference>
<dbReference type="PDB" id="2BNR">
    <property type="method" value="X-ray"/>
    <property type="resolution" value="1.90 A"/>
    <property type="chains" value="C=157-165"/>
</dbReference>
<dbReference type="PDB" id="2F53">
    <property type="method" value="X-ray"/>
    <property type="resolution" value="2.10 A"/>
    <property type="chains" value="C=157-165"/>
</dbReference>
<dbReference type="PDB" id="2F54">
    <property type="method" value="X-ray"/>
    <property type="resolution" value="2.70 A"/>
    <property type="chains" value="C/H=157-165"/>
</dbReference>
<dbReference type="PDB" id="2P5E">
    <property type="method" value="X-ray"/>
    <property type="resolution" value="1.89 A"/>
    <property type="chains" value="C=157-165"/>
</dbReference>
<dbReference type="PDB" id="2P5W">
    <property type="method" value="X-ray"/>
    <property type="resolution" value="2.20 A"/>
    <property type="chains" value="C=157-165"/>
</dbReference>
<dbReference type="PDB" id="2PYE">
    <property type="method" value="X-ray"/>
    <property type="resolution" value="2.30 A"/>
    <property type="chains" value="C=157-165"/>
</dbReference>
<dbReference type="PDB" id="3GJF">
    <property type="method" value="X-ray"/>
    <property type="resolution" value="1.90 A"/>
    <property type="chains" value="C/F=157-164"/>
</dbReference>
<dbReference type="PDB" id="3HAE">
    <property type="method" value="X-ray"/>
    <property type="resolution" value="2.90 A"/>
    <property type="chains" value="C/F/M/R=157-164"/>
</dbReference>
<dbReference type="PDB" id="3KLA">
    <property type="method" value="X-ray"/>
    <property type="resolution" value="1.65 A"/>
    <property type="chains" value="C/F=157-165"/>
</dbReference>
<dbReference type="PDB" id="6AT5">
    <property type="method" value="X-ray"/>
    <property type="resolution" value="1.50 A"/>
    <property type="chains" value="C=60-72"/>
</dbReference>
<dbReference type="PDB" id="6AVF">
    <property type="method" value="X-ray"/>
    <property type="resolution" value="2.03 A"/>
    <property type="chains" value="P=60-72"/>
</dbReference>
<dbReference type="PDB" id="6AVG">
    <property type="method" value="X-ray"/>
    <property type="resolution" value="2.60 A"/>
    <property type="chains" value="P/Q=60-72"/>
</dbReference>
<dbReference type="PDB" id="6RP9">
    <property type="method" value="X-ray"/>
    <property type="resolution" value="3.12 A"/>
    <property type="chains" value="C/H=157-165"/>
</dbReference>
<dbReference type="PDB" id="6RPA">
    <property type="method" value="X-ray"/>
    <property type="resolution" value="2.56 A"/>
    <property type="chains" value="C=157-164"/>
</dbReference>
<dbReference type="PDB" id="6RPB">
    <property type="method" value="X-ray"/>
    <property type="resolution" value="2.50 A"/>
    <property type="chains" value="C/H/M/R=157-164"/>
</dbReference>
<dbReference type="PDB" id="9C3E">
    <property type="method" value="EM"/>
    <property type="resolution" value="3.50 A"/>
    <property type="chains" value="H=157-165"/>
</dbReference>
<dbReference type="PDB" id="9DL1">
    <property type="method" value="X-ray"/>
    <property type="resolution" value="2.30 A"/>
    <property type="chains" value="E/H=157-164"/>
</dbReference>
<dbReference type="PDBsum" id="1S9W"/>
<dbReference type="PDBsum" id="2BNQ"/>
<dbReference type="PDBsum" id="2BNR"/>
<dbReference type="PDBsum" id="2F53"/>
<dbReference type="PDBsum" id="2F54"/>
<dbReference type="PDBsum" id="2P5E"/>
<dbReference type="PDBsum" id="2P5W"/>
<dbReference type="PDBsum" id="2PYE"/>
<dbReference type="PDBsum" id="3GJF"/>
<dbReference type="PDBsum" id="3HAE"/>
<dbReference type="PDBsum" id="3KLA"/>
<dbReference type="PDBsum" id="6AT5"/>
<dbReference type="PDBsum" id="6AVF"/>
<dbReference type="PDBsum" id="6AVG"/>
<dbReference type="PDBsum" id="6RP9"/>
<dbReference type="PDBsum" id="6RPA"/>
<dbReference type="PDBsum" id="6RPB"/>
<dbReference type="PDBsum" id="9C3E"/>
<dbReference type="PDBsum" id="9DL1"/>
<dbReference type="SMR" id="P78358"/>
<dbReference type="BioGRID" id="107867">
    <property type="interactions" value="118"/>
</dbReference>
<dbReference type="BioGRID" id="128863">
    <property type="interactions" value="79"/>
</dbReference>
<dbReference type="FunCoup" id="P78358">
    <property type="interactions" value="27"/>
</dbReference>
<dbReference type="IntAct" id="P78358">
    <property type="interactions" value="110"/>
</dbReference>
<dbReference type="STRING" id="9606.ENSP00000332602"/>
<dbReference type="ChEMBL" id="CHEMBL4804257"/>
<dbReference type="iPTMnet" id="P78358"/>
<dbReference type="PhosphoSitePlus" id="P78358"/>
<dbReference type="BioMuta" id="CTAG1A"/>
<dbReference type="DMDM" id="6014739"/>
<dbReference type="jPOST" id="P78358"/>
<dbReference type="MassIVE" id="P78358"/>
<dbReference type="PaxDb" id="9606-ENSP00000332602"/>
<dbReference type="PeptideAtlas" id="P78358"/>
<dbReference type="ProteomicsDB" id="57589">
    <molecule id="P78358-1"/>
</dbReference>
<dbReference type="ProteomicsDB" id="57590">
    <molecule id="P78358-2"/>
</dbReference>
<dbReference type="TopDownProteomics" id="P78358-1">
    <molecule id="P78358-1"/>
</dbReference>
<dbReference type="ABCD" id="P78358">
    <property type="antibodies" value="2 sequenced antibodies"/>
</dbReference>
<dbReference type="Antibodypedia" id="4225">
    <property type="antibodies" value="885 antibodies from 28 providers"/>
</dbReference>
<dbReference type="Antibodypedia" id="74750">
    <property type="antibodies" value="43 antibodies from 12 providers"/>
</dbReference>
<dbReference type="DNASU" id="246100"/>
<dbReference type="Ensembl" id="ENST00000328435.3">
    <molecule id="P78358-1"/>
    <property type="protein sequence ID" value="ENSP00000332602.2"/>
    <property type="gene ID" value="ENSG00000184033.14"/>
</dbReference>
<dbReference type="Ensembl" id="ENST00000359887.4">
    <molecule id="P78358-2"/>
    <property type="protein sequence ID" value="ENSP00000352953.4"/>
    <property type="gene ID" value="ENSG00000184033.14"/>
</dbReference>
<dbReference type="Ensembl" id="ENST00000593606.3">
    <molecule id="P78358-2"/>
    <property type="protein sequence ID" value="ENSP00000472220.3"/>
    <property type="gene ID" value="ENSG00000268651.4"/>
</dbReference>
<dbReference type="Ensembl" id="ENST00000599837.3">
    <molecule id="P78358-1"/>
    <property type="protein sequence ID" value="ENSP00000469441.1"/>
    <property type="gene ID" value="ENSG00000268651.4"/>
</dbReference>
<dbReference type="GeneID" id="1485"/>
<dbReference type="GeneID" id="246100"/>
<dbReference type="KEGG" id="hsa:1485"/>
<dbReference type="KEGG" id="hsa:246100"/>
<dbReference type="MANE-Select" id="ENST00000328435.3">
    <property type="protein sequence ID" value="ENSP00000332602.2"/>
    <property type="RefSeq nucleotide sequence ID" value="NM_001327.3"/>
    <property type="RefSeq protein sequence ID" value="NP_001318.1"/>
</dbReference>
<dbReference type="MANE-Select" id="ENST00000599837.3">
    <property type="protein sequence ID" value="ENSP00000469441.1"/>
    <property type="RefSeq nucleotide sequence ID" value="NM_139250.2"/>
    <property type="RefSeq protein sequence ID" value="NP_640343.1"/>
</dbReference>
<dbReference type="UCSC" id="uc004fme.3">
    <molecule id="P78358-1"/>
    <property type="organism name" value="human"/>
</dbReference>
<dbReference type="AGR" id="HGNC:24198"/>
<dbReference type="AGR" id="HGNC:2491"/>
<dbReference type="CTD" id="1485"/>
<dbReference type="CTD" id="246100"/>
<dbReference type="DisGeNET" id="1485"/>
<dbReference type="DisGeNET" id="246100"/>
<dbReference type="GeneCards" id="CTAG1A"/>
<dbReference type="GeneCards" id="CTAG1B"/>
<dbReference type="HGNC" id="HGNC:24198">
    <property type="gene designation" value="CTAG1A"/>
</dbReference>
<dbReference type="HGNC" id="HGNC:2491">
    <property type="gene designation" value="CTAG1B"/>
</dbReference>
<dbReference type="HPA" id="ENSG00000184033">
    <property type="expression patterns" value="Tissue enriched (testis)"/>
</dbReference>
<dbReference type="HPA" id="ENSG00000268651">
    <property type="expression patterns" value="Tissue enriched (testis)"/>
</dbReference>
<dbReference type="MIM" id="300156">
    <property type="type" value="gene"/>
</dbReference>
<dbReference type="MIM" id="300657">
    <property type="type" value="gene"/>
</dbReference>
<dbReference type="neXtProt" id="NX_P78358"/>
<dbReference type="OpenTargets" id="ENSG00000184033"/>
<dbReference type="PharmGKB" id="PA134979749"/>
<dbReference type="VEuPathDB" id="HostDB:ENSG00000184033"/>
<dbReference type="VEuPathDB" id="HostDB:ENSG00000268651"/>
<dbReference type="eggNOG" id="ENOG502TM3F">
    <property type="taxonomic scope" value="Eukaryota"/>
</dbReference>
<dbReference type="GeneTree" id="ENSGT00410000025802"/>
<dbReference type="HOGENOM" id="CLU_113770_0_0_1"/>
<dbReference type="InParanoid" id="P78358"/>
<dbReference type="OMA" id="FAKPQAG"/>
<dbReference type="OrthoDB" id="9838480at2759"/>
<dbReference type="PAN-GO" id="P78358">
    <property type="GO annotations" value="1 GO annotation based on evolutionary models"/>
</dbReference>
<dbReference type="PhylomeDB" id="P78358"/>
<dbReference type="TreeFam" id="TF337064"/>
<dbReference type="PathwayCommons" id="P78358"/>
<dbReference type="SignaLink" id="P78358"/>
<dbReference type="BioGRID-ORCS" id="1485">
    <property type="hits" value="115 hits in 634 CRISPR screens"/>
</dbReference>
<dbReference type="BioGRID-ORCS" id="246100">
    <property type="hits" value="18 hits in 625 CRISPR screens"/>
</dbReference>
<dbReference type="EvolutionaryTrace" id="P78358"/>
<dbReference type="GeneWiki" id="CTAG1B"/>
<dbReference type="Pharos" id="P78358">
    <property type="development level" value="Tbio"/>
</dbReference>
<dbReference type="PRO" id="PR:P78358"/>
<dbReference type="Proteomes" id="UP000005640">
    <property type="component" value="Chromosome X"/>
</dbReference>
<dbReference type="RNAct" id="P78358">
    <property type="molecule type" value="protein"/>
</dbReference>
<dbReference type="Bgee" id="ENSG00000184033">
    <property type="expression patterns" value="Expressed in primordial germ cell in gonad and 30 other cell types or tissues"/>
</dbReference>
<dbReference type="ExpressionAtlas" id="P78358">
    <property type="expression patterns" value="baseline"/>
</dbReference>
<dbReference type="GO" id="GO:0005737">
    <property type="term" value="C:cytoplasm"/>
    <property type="evidence" value="ECO:0000314"/>
    <property type="project" value="UniProtKB"/>
</dbReference>
<dbReference type="GO" id="GO:0042802">
    <property type="term" value="F:identical protein binding"/>
    <property type="evidence" value="ECO:0000353"/>
    <property type="project" value="IntAct"/>
</dbReference>
<dbReference type="GO" id="GO:0070525">
    <property type="term" value="P:tRNA threonylcarbamoyladenosine metabolic process"/>
    <property type="evidence" value="ECO:0000318"/>
    <property type="project" value="GO_Central"/>
</dbReference>
<dbReference type="FunFam" id="3.30.310.50:FF:000008">
    <property type="entry name" value="Cancer/testis antigen 2"/>
    <property type="match status" value="1"/>
</dbReference>
<dbReference type="Gene3D" id="3.30.310.50">
    <property type="entry name" value="Alpha-D-phosphohexomutase, C-terminal domain"/>
    <property type="match status" value="1"/>
</dbReference>
<dbReference type="InterPro" id="IPR015419">
    <property type="entry name" value="CTAG/Pcc1"/>
</dbReference>
<dbReference type="PANTHER" id="PTHR31283:SF4">
    <property type="entry name" value="CANCER_TESTIS ANTIGEN 1"/>
    <property type="match status" value="1"/>
</dbReference>
<dbReference type="PANTHER" id="PTHR31283">
    <property type="entry name" value="EKC/KEOPS COMPLEX SUBUNIT PCC1 FAMILY MEMBER"/>
    <property type="match status" value="1"/>
</dbReference>
<dbReference type="Pfam" id="PF09341">
    <property type="entry name" value="Pcc1"/>
    <property type="match status" value="1"/>
</dbReference>
<proteinExistence type="evidence at protein level"/>
<gene>
    <name type="primary">CTAG1A</name>
    <name type="synonym">CTAG</name>
    <name type="synonym">CTAG1</name>
    <name type="synonym">ESO1</name>
    <name type="synonym">LAGE2</name>
    <name type="synonym">LAGE2A</name>
</gene>
<gene>
    <name type="primary">CTAG1B</name>
    <name type="synonym">LAGE2B</name>
</gene>
<organism>
    <name type="scientific">Homo sapiens</name>
    <name type="common">Human</name>
    <dbReference type="NCBI Taxonomy" id="9606"/>
    <lineage>
        <taxon>Eukaryota</taxon>
        <taxon>Metazoa</taxon>
        <taxon>Chordata</taxon>
        <taxon>Craniata</taxon>
        <taxon>Vertebrata</taxon>
        <taxon>Euteleostomi</taxon>
        <taxon>Mammalia</taxon>
        <taxon>Eutheria</taxon>
        <taxon>Euarchontoglires</taxon>
        <taxon>Primates</taxon>
        <taxon>Haplorrhini</taxon>
        <taxon>Catarrhini</taxon>
        <taxon>Hominidae</taxon>
        <taxon>Homo</taxon>
    </lineage>
</organism>
<comment type="interaction">
    <interactant intactId="EBI-1188472">
        <id>P78358</id>
    </interactant>
    <interactant intactId="EBI-2880652">
        <id>Q08043</id>
        <label>ACTN3</label>
    </interactant>
    <organismsDiffer>false</organismsDiffer>
    <experiments>5</experiments>
</comment>
<comment type="interaction">
    <interactant intactId="EBI-1188472">
        <id>P78358</id>
    </interactant>
    <interactant intactId="EBI-8643161">
        <id>Q9NX04</id>
        <label>AIRIM</label>
    </interactant>
    <organismsDiffer>false</organismsDiffer>
    <experiments>3</experiments>
</comment>
<comment type="interaction">
    <interactant intactId="EBI-1188472">
        <id>P78358</id>
    </interactant>
    <interactant intactId="EBI-12150557">
        <id>O15296</id>
        <label>ALOX15B</label>
    </interactant>
    <organismsDiffer>false</organismsDiffer>
    <experiments>3</experiments>
</comment>
<comment type="interaction">
    <interactant intactId="EBI-1188472">
        <id>P78358</id>
    </interactant>
    <interactant intactId="EBI-13062134">
        <id>Q8N1W1-4</id>
        <label>ARHGEF28</label>
    </interactant>
    <organismsDiffer>false</organismsDiffer>
    <experiments>3</experiments>
</comment>
<comment type="interaction">
    <interactant intactId="EBI-1188472">
        <id>P78358</id>
    </interactant>
    <interactant intactId="EBI-12356439">
        <id>Q13733-2</id>
        <label>ATP1A4</label>
    </interactant>
    <organismsDiffer>false</organismsDiffer>
    <experiments>3</experiments>
</comment>
<comment type="interaction">
    <interactant intactId="EBI-1188472">
        <id>P78358</id>
    </interactant>
    <interactant intactId="EBI-10988864">
        <id>P46379-2</id>
        <label>BAG6</label>
    </interactant>
    <organismsDiffer>false</organismsDiffer>
    <experiments>3</experiments>
</comment>
<comment type="interaction">
    <interactant intactId="EBI-1188472">
        <id>P78358</id>
    </interactant>
    <interactant intactId="EBI-7162175">
        <id>Q9HBH7</id>
        <label>BEX1</label>
    </interactant>
    <organismsDiffer>false</organismsDiffer>
    <experiments>5</experiments>
</comment>
<comment type="interaction">
    <interactant intactId="EBI-1188472">
        <id>P78358</id>
    </interactant>
    <interactant intactId="EBI-745073">
        <id>Q9BXY8</id>
        <label>BEX2</label>
    </interactant>
    <organismsDiffer>false</organismsDiffer>
    <experiments>5</experiments>
</comment>
<comment type="interaction">
    <interactant intactId="EBI-1188472">
        <id>P78358</id>
    </interactant>
    <interactant intactId="EBI-3919268">
        <id>Q96LC9</id>
        <label>BMF</label>
    </interactant>
    <organismsDiffer>false</organismsDiffer>
    <experiments>3</experiments>
</comment>
<comment type="interaction">
    <interactant intactId="EBI-1188472">
        <id>P78358</id>
    </interactant>
    <interactant intactId="EBI-744076">
        <id>Q96FH0</id>
        <label>BORCS8</label>
    </interactant>
    <organismsDiffer>false</organismsDiffer>
    <experiments>5</experiments>
</comment>
<comment type="interaction">
    <interactant intactId="EBI-1188472">
        <id>P78358</id>
    </interactant>
    <interactant intactId="EBI-725606">
        <id>Q9NWQ9</id>
        <label>C14orf119</label>
    </interactant>
    <organismsDiffer>false</organismsDiffer>
    <experiments>3</experiments>
</comment>
<comment type="interaction">
    <interactant intactId="EBI-1188472">
        <id>P78358</id>
    </interactant>
    <interactant intactId="EBI-12036363">
        <id>Q5T5Y3-3</id>
        <label>CAMSAP1</label>
    </interactant>
    <organismsDiffer>false</organismsDiffer>
    <experiments>3</experiments>
</comment>
<comment type="interaction">
    <interactant intactId="EBI-1188472">
        <id>P78358</id>
    </interactant>
    <interactant intactId="EBI-744311">
        <id>Q8IYX3</id>
        <label>CCDC116</label>
    </interactant>
    <organismsDiffer>false</organismsDiffer>
    <experiments>3</experiments>
</comment>
<comment type="interaction">
    <interactant intactId="EBI-1188472">
        <id>P78358</id>
    </interactant>
    <interactant intactId="EBI-10175300">
        <id>Q8TD31-3</id>
        <label>CCHCR1</label>
    </interactant>
    <organismsDiffer>false</organismsDiffer>
    <experiments>3</experiments>
</comment>
<comment type="interaction">
    <interactant intactId="EBI-1188472">
        <id>P78358</id>
    </interactant>
    <interactant intactId="EBI-295634">
        <id>Q16543</id>
        <label>CDC37</label>
    </interactant>
    <organismsDiffer>false</organismsDiffer>
    <experiments>3</experiments>
</comment>
<comment type="interaction">
    <interactant intactId="EBI-1188472">
        <id>P78358</id>
    </interactant>
    <interactant intactId="EBI-10038935">
        <id>Q96HQ2</id>
        <label>CDKN2AIPNL</label>
    </interactant>
    <organismsDiffer>false</organismsDiffer>
    <experiments>3</experiments>
</comment>
<comment type="interaction">
    <interactant intactId="EBI-1188472">
        <id>P78358</id>
    </interactant>
    <interactant intactId="EBI-2321769">
        <id>Q9Y6H1</id>
        <label>CHCHD2</label>
    </interactant>
    <organismsDiffer>false</organismsDiffer>
    <experiments>3</experiments>
</comment>
<comment type="interaction">
    <interactant intactId="EBI-1188472">
        <id>P78358</id>
    </interactant>
    <interactant intactId="EBI-747012">
        <id>Q9H0L4</id>
        <label>CSTF2T</label>
    </interactant>
    <organismsDiffer>false</organismsDiffer>
    <experiments>3</experiments>
</comment>
<comment type="interaction">
    <interactant intactId="EBI-1188472">
        <id>P78358</id>
    </interactant>
    <interactant intactId="EBI-1188472">
        <id>P78358</id>
        <label>CTAG1B</label>
    </interactant>
    <organismsDiffer>false</organismsDiffer>
    <experiments>3</experiments>
</comment>
<comment type="interaction">
    <interactant intactId="EBI-1188472">
        <id>P78358</id>
    </interactant>
    <interactant intactId="EBI-11521003">
        <id>Q9UIA0</id>
        <label>CYTH4</label>
    </interactant>
    <organismsDiffer>false</organismsDiffer>
    <experiments>3</experiments>
</comment>
<comment type="interaction">
    <interactant intactId="EBI-1188472">
        <id>P78358</id>
    </interactant>
    <interactant intactId="EBI-742054">
        <id>Q96D03</id>
        <label>DDIT4L</label>
    </interactant>
    <organismsDiffer>false</organismsDiffer>
    <experiments>3</experiments>
</comment>
<comment type="interaction">
    <interactant intactId="EBI-1188472">
        <id>P78358</id>
    </interactant>
    <interactant intactId="EBI-2806959">
        <id>Q6ICB0</id>
        <label>DESI1</label>
    </interactant>
    <organismsDiffer>false</organismsDiffer>
    <experiments>3</experiments>
</comment>
<comment type="interaction">
    <interactant intactId="EBI-1188472">
        <id>P78358</id>
    </interactant>
    <interactant intactId="EBI-11958845">
        <id>O94868-3</id>
        <label>FCHSD2</label>
    </interactant>
    <organismsDiffer>false</organismsDiffer>
    <experiments>3</experiments>
</comment>
<comment type="interaction">
    <interactant intactId="EBI-1188472">
        <id>P78358</id>
    </interactant>
    <interactant intactId="EBI-5661036">
        <id>A1L4K1</id>
        <label>FSD2</label>
    </interactant>
    <organismsDiffer>false</organismsDiffer>
    <experiments>3</experiments>
</comment>
<comment type="interaction">
    <interactant intactId="EBI-1188472">
        <id>P78358</id>
    </interactant>
    <interactant intactId="EBI-6929453">
        <id>O43716</id>
        <label>GATC</label>
    </interactant>
    <organismsDiffer>false</organismsDiffer>
    <experiments>3</experiments>
</comment>
<comment type="interaction">
    <interactant intactId="EBI-1188472">
        <id>P78358</id>
    </interactant>
    <interactant intactId="EBI-11427343">
        <id>Q9P2W3</id>
        <label>GNG13</label>
    </interactant>
    <organismsDiffer>false</organismsDiffer>
    <experiments>3</experiments>
</comment>
<comment type="interaction">
    <interactant intactId="EBI-1188472">
        <id>P78358</id>
    </interactant>
    <interactant intactId="EBI-347538">
        <id>Q9Y4H4</id>
        <label>GPSM3</label>
    </interactant>
    <organismsDiffer>false</organismsDiffer>
    <experiments>5</experiments>
</comment>
<comment type="interaction">
    <interactant intactId="EBI-1188472">
        <id>P78358</id>
    </interactant>
    <interactant intactId="EBI-12033200">
        <id>P78347-2</id>
        <label>GTF2I</label>
    </interactant>
    <organismsDiffer>false</organismsDiffer>
    <experiments>5</experiments>
</comment>
<comment type="interaction">
    <interactant intactId="EBI-1188472">
        <id>P78358</id>
    </interactant>
    <interactant intactId="EBI-11978177">
        <id>Q96NT3-2</id>
        <label>GUCD1</label>
    </interactant>
    <organismsDiffer>false</organismsDiffer>
    <experiments>3</experiments>
</comment>
<comment type="interaction">
    <interactant intactId="EBI-1188472">
        <id>P78358</id>
    </interactant>
    <interactant intactId="EBI-9834454">
        <id>P08631-2</id>
        <label>HCK</label>
    </interactant>
    <organismsDiffer>false</organismsDiffer>
    <experiments>3</experiments>
</comment>
<comment type="interaction">
    <interactant intactId="EBI-1188472">
        <id>P78358</id>
    </interactant>
    <interactant intactId="EBI-10329202">
        <id>Q9Y5R4</id>
        <label>HEMK1</label>
    </interactant>
    <organismsDiffer>false</organismsDiffer>
    <experiments>3</experiments>
</comment>
<comment type="interaction">
    <interactant intactId="EBI-1188472">
        <id>P78358</id>
    </interactant>
    <interactant intactId="EBI-740641">
        <id>Q9NP66</id>
        <label>HMG20A</label>
    </interactant>
    <organismsDiffer>false</organismsDiffer>
    <experiments>3</experiments>
</comment>
<comment type="interaction">
    <interactant intactId="EBI-1188472">
        <id>P78358</id>
    </interactant>
    <interactant intactId="EBI-1642152">
        <id>Q9ULI4</id>
        <label>KIF26A</label>
    </interactant>
    <organismsDiffer>false</organismsDiffer>
    <experiments>3</experiments>
</comment>
<comment type="interaction">
    <interactant intactId="EBI-1188472">
        <id>P78358</id>
    </interactant>
    <interactant intactId="EBI-6426443">
        <id>Q2WGJ6</id>
        <label>KLHL38</label>
    </interactant>
    <organismsDiffer>false</organismsDiffer>
    <experiments>5</experiments>
</comment>
<comment type="interaction">
    <interactant intactId="EBI-1188472">
        <id>P78358</id>
    </interactant>
    <interactant intactId="EBI-715385">
        <id>Q6IAA8</id>
        <label>LAMTOR1</label>
    </interactant>
    <organismsDiffer>false</organismsDiffer>
    <experiments>3</experiments>
</comment>
<comment type="interaction">
    <interactant intactId="EBI-1188472">
        <id>P78358</id>
    </interactant>
    <interactant intactId="EBI-12133176">
        <id>Q9UIQ6-2</id>
        <label>LNPEP</label>
    </interactant>
    <organismsDiffer>false</organismsDiffer>
    <experiments>3</experiments>
</comment>
<comment type="interaction">
    <interactant intactId="EBI-1188472">
        <id>P78358</id>
    </interactant>
    <interactant intactId="EBI-2690768">
        <id>Q496Y0</id>
        <label>LONRF3</label>
    </interactant>
    <organismsDiffer>false</organismsDiffer>
    <experiments>3</experiments>
</comment>
<comment type="interaction">
    <interactant intactId="EBI-1188472">
        <id>P78358</id>
    </interactant>
    <interactant intactId="EBI-1188463">
        <id>O60732</id>
        <label>MAGEC1</label>
    </interactant>
    <organismsDiffer>false</organismsDiffer>
    <experiments>6</experiments>
</comment>
<comment type="interaction">
    <interactant intactId="EBI-1188472">
        <id>P78358</id>
    </interactant>
    <interactant intactId="EBI-8025850">
        <id>O14770-4</id>
        <label>MEIS2</label>
    </interactant>
    <organismsDiffer>false</organismsDiffer>
    <experiments>3</experiments>
</comment>
<comment type="interaction">
    <interactant intactId="EBI-1188472">
        <id>P78358</id>
    </interactant>
    <interactant intactId="EBI-11991020">
        <id>A6NI15</id>
        <label>MSGN1</label>
    </interactant>
    <organismsDiffer>false</organismsDiffer>
    <experiments>3</experiments>
</comment>
<comment type="interaction">
    <interactant intactId="EBI-1188472">
        <id>P78358</id>
    </interactant>
    <interactant intactId="EBI-8641936">
        <id>Q15742</id>
        <label>NAB2</label>
    </interactant>
    <organismsDiffer>false</organismsDiffer>
    <experiments>3</experiments>
</comment>
<comment type="interaction">
    <interactant intactId="EBI-1188472">
        <id>P78358</id>
    </interactant>
    <interactant intactId="EBI-746987">
        <id>P62166</id>
        <label>NCS1</label>
    </interactant>
    <organismsDiffer>false</organismsDiffer>
    <experiments>3</experiments>
</comment>
<comment type="interaction">
    <interactant intactId="EBI-1188472">
        <id>P78358</id>
    </interactant>
    <interactant intactId="EBI-741158">
        <id>Q96HA8</id>
        <label>NTAQ1</label>
    </interactant>
    <organismsDiffer>false</organismsDiffer>
    <experiments>3</experiments>
</comment>
<comment type="interaction">
    <interactant intactId="EBI-1188472">
        <id>P78358</id>
    </interactant>
    <interactant intactId="EBI-10181968">
        <id>Q7Z4N8</id>
        <label>P4HA3</label>
    </interactant>
    <organismsDiffer>false</organismsDiffer>
    <experiments>3</experiments>
</comment>
<comment type="interaction">
    <interactant intactId="EBI-1188472">
        <id>P78358</id>
    </interactant>
    <interactant intactId="EBI-724639">
        <id>Q9UBV8</id>
        <label>PEF1</label>
    </interactant>
    <organismsDiffer>false</organismsDiffer>
    <experiments>3</experiments>
</comment>
<comment type="interaction">
    <interactant intactId="EBI-1188472">
        <id>P78358</id>
    </interactant>
    <interactant intactId="EBI-10232538">
        <id>Q8WWB5</id>
        <label>PIH1D2</label>
    </interactant>
    <organismsDiffer>false</organismsDiffer>
    <experiments>3</experiments>
</comment>
<comment type="interaction">
    <interactant intactId="EBI-1188472">
        <id>P78358</id>
    </interactant>
    <interactant intactId="EBI-10253863">
        <id>Q6PIY2</id>
        <label>POLM</label>
    </interactant>
    <organismsDiffer>false</organismsDiffer>
    <experiments>3</experiments>
</comment>
<comment type="interaction">
    <interactant intactId="EBI-1188472">
        <id>P78358</id>
    </interactant>
    <interactant intactId="EBI-372273">
        <id>P20618</id>
        <label>PSMB1</label>
    </interactant>
    <organismsDiffer>false</organismsDiffer>
    <experiments>3</experiments>
</comment>
<comment type="interaction">
    <interactant intactId="EBI-1188472">
        <id>P78358</id>
    </interactant>
    <interactant intactId="EBI-310569">
        <id>Q6VN20</id>
        <label>RANBP10</label>
    </interactant>
    <organismsDiffer>false</organismsDiffer>
    <experiments>3</experiments>
</comment>
<comment type="interaction">
    <interactant intactId="EBI-1188472">
        <id>P78358</id>
    </interactant>
    <interactant intactId="EBI-745810">
        <id>Q96EN9</id>
        <label>REX1BD</label>
    </interactant>
    <organismsDiffer>false</organismsDiffer>
    <experiments>3</experiments>
</comment>
<comment type="interaction">
    <interactant intactId="EBI-1188472">
        <id>P78358</id>
    </interactant>
    <interactant intactId="EBI-953753">
        <id>Q7L4I2</id>
        <label>RSRC2</label>
    </interactant>
    <organismsDiffer>false</organismsDiffer>
    <experiments>3</experiments>
</comment>
<comment type="interaction">
    <interactant intactId="EBI-1188472">
        <id>P78358</id>
    </interactant>
    <interactant intactId="EBI-743502">
        <id>Q8WWV3</id>
        <label>RTN4IP1</label>
    </interactant>
    <organismsDiffer>false</organismsDiffer>
    <experiments>6</experiments>
</comment>
<comment type="interaction">
    <interactant intactId="EBI-1188472">
        <id>P78358</id>
    </interactant>
    <interactant intactId="EBI-6257312">
        <id>Q9BVN2</id>
        <label>RUSC1</label>
    </interactant>
    <organismsDiffer>false</organismsDiffer>
    <experiments>3</experiments>
</comment>
<comment type="interaction">
    <interactant intactId="EBI-1188472">
        <id>P78358</id>
    </interactant>
    <interactant intactId="EBI-10320311">
        <id>Q9UDX3</id>
        <label>SEC14L4</label>
    </interactant>
    <organismsDiffer>false</organismsDiffer>
    <experiments>3</experiments>
</comment>
<comment type="interaction">
    <interactant intactId="EBI-1188472">
        <id>P78358</id>
    </interactant>
    <interactant intactId="EBI-347996">
        <id>O43765</id>
        <label>SGTA</label>
    </interactant>
    <organismsDiffer>false</organismsDiffer>
    <experiments>3</experiments>
</comment>
<comment type="interaction">
    <interactant intactId="EBI-1188472">
        <id>P78358</id>
    </interactant>
    <interactant intactId="EBI-744081">
        <id>Q96EQ0</id>
        <label>SGTB</label>
    </interactant>
    <organismsDiffer>false</organismsDiffer>
    <experiments>3</experiments>
</comment>
<comment type="interaction">
    <interactant intactId="EBI-1188472">
        <id>P78358</id>
    </interactant>
    <interactant intactId="EBI-1773646">
        <id>Q9BRV8</id>
        <label>SIKE1</label>
    </interactant>
    <organismsDiffer>false</organismsDiffer>
    <experiments>3</experiments>
</comment>
<comment type="interaction">
    <interactant intactId="EBI-1188472">
        <id>P78358</id>
    </interactant>
    <interactant intactId="EBI-2872322">
        <id>Q9H0W8</id>
        <label>SMG9</label>
    </interactant>
    <organismsDiffer>false</organismsDiffer>
    <experiments>5</experiments>
</comment>
<comment type="interaction">
    <interactant intactId="EBI-1188472">
        <id>P78358</id>
    </interactant>
    <interactant intactId="EBI-12288855">
        <id>Q5JUK2</id>
        <label>SOHLH1</label>
    </interactant>
    <organismsDiffer>false</organismsDiffer>
    <experiments>5</experiments>
</comment>
<comment type="interaction">
    <interactant intactId="EBI-1188472">
        <id>P78358</id>
    </interactant>
    <interactant intactId="EBI-11959123">
        <id>Q99932-2</id>
        <label>SPAG8</label>
    </interactant>
    <organismsDiffer>false</organismsDiffer>
    <experiments>5</experiments>
</comment>
<comment type="interaction">
    <interactant intactId="EBI-1188472">
        <id>P78358</id>
    </interactant>
    <interactant intactId="EBI-12036261">
        <id>Q7Z7C7</id>
        <label>STRA8</label>
    </interactant>
    <organismsDiffer>false</organismsDiffer>
    <experiments>3</experiments>
</comment>
<comment type="interaction">
    <interactant intactId="EBI-1188472">
        <id>P78358</id>
    </interactant>
    <interactant intactId="EBI-3921347">
        <id>P51687</id>
        <label>SUOX</label>
    </interactant>
    <organismsDiffer>false</organismsDiffer>
    <experiments>3</experiments>
</comment>
<comment type="interaction">
    <interactant intactId="EBI-1188472">
        <id>P78358</id>
    </interactant>
    <interactant intactId="EBI-11955057">
        <id>Q8N8B7-2</id>
        <label>TCEANC</label>
    </interactant>
    <organismsDiffer>false</organismsDiffer>
    <experiments>3</experiments>
</comment>
<comment type="interaction">
    <interactant intactId="EBI-1188472">
        <id>P78358</id>
    </interactant>
    <interactant intactId="EBI-11139477">
        <id>Q96N21</id>
        <label>TEPSIN</label>
    </interactant>
    <organismsDiffer>false</organismsDiffer>
    <experiments>3</experiments>
</comment>
<comment type="interaction">
    <interactant intactId="EBI-1188472">
        <id>P78358</id>
    </interactant>
    <interactant intactId="EBI-1765605">
        <id>Q96FV9</id>
        <label>THOC1</label>
    </interactant>
    <organismsDiffer>false</organismsDiffer>
    <experiments>3</experiments>
</comment>
<comment type="interaction">
    <interactant intactId="EBI-1188472">
        <id>P78358</id>
    </interactant>
    <interactant intactId="EBI-12076664">
        <id>O14787-2</id>
        <label>TNPO2</label>
    </interactant>
    <organismsDiffer>false</organismsDiffer>
    <experiments>3</experiments>
</comment>
<comment type="interaction">
    <interactant intactId="EBI-1188472">
        <id>P78358</id>
    </interactant>
    <interactant intactId="EBI-492476">
        <id>Q96RU7</id>
        <label>TRIB3</label>
    </interactant>
    <organismsDiffer>false</organismsDiffer>
    <experiments>3</experiments>
</comment>
<comment type="interaction">
    <interactant intactId="EBI-1188472">
        <id>P78358</id>
    </interactant>
    <interactant intactId="EBI-10241197">
        <id>Q3SY00</id>
        <label>TSGA10IP</label>
    </interactant>
    <organismsDiffer>false</organismsDiffer>
    <experiments>3</experiments>
</comment>
<comment type="interaction">
    <interactant intactId="EBI-1188472">
        <id>P78358</id>
    </interactant>
    <interactant intactId="EBI-1050671">
        <id>Q13404</id>
        <label>UBE2V1</label>
    </interactant>
    <organismsDiffer>false</organismsDiffer>
    <experiments>3</experiments>
</comment>
<comment type="interaction">
    <interactant intactId="EBI-1188472">
        <id>P78358</id>
    </interactant>
    <interactant intactId="EBI-607755">
        <id>Q9BZL1</id>
        <label>UBL5</label>
    </interactant>
    <organismsDiffer>false</organismsDiffer>
    <experiments>3</experiments>
</comment>
<comment type="interaction">
    <interactant intactId="EBI-1188472">
        <id>P78358</id>
    </interactant>
    <interactant intactId="EBI-741480">
        <id>Q9UMX0</id>
        <label>UBQLN1</label>
    </interactant>
    <organismsDiffer>false</organismsDiffer>
    <experiments>6</experiments>
</comment>
<comment type="interaction">
    <interactant intactId="EBI-1188472">
        <id>P78358</id>
    </interactant>
    <interactant intactId="EBI-10173939">
        <id>Q9UMX0-2</id>
        <label>UBQLN1</label>
    </interactant>
    <organismsDiffer>false</organismsDiffer>
    <experiments>3</experiments>
</comment>
<comment type="interaction">
    <interactant intactId="EBI-1188472">
        <id>P78358</id>
    </interactant>
    <interactant intactId="EBI-947187">
        <id>Q9UHD9</id>
        <label>UBQLN2</label>
    </interactant>
    <organismsDiffer>false</organismsDiffer>
    <experiments>3</experiments>
</comment>
<comment type="interaction">
    <interactant intactId="EBI-1188472">
        <id>P78358</id>
    </interactant>
    <interactant intactId="EBI-2511991">
        <id>Q9Y2K6</id>
        <label>USP20</label>
    </interactant>
    <organismsDiffer>false</organismsDiffer>
    <experiments>3</experiments>
</comment>
<comment type="interaction">
    <interactant intactId="EBI-1188472">
        <id>P78358</id>
    </interactant>
    <interactant intactId="EBI-10191303">
        <id>O95231</id>
        <label>VENTX</label>
    </interactant>
    <organismsDiffer>false</organismsDiffer>
    <experiments>5</experiments>
</comment>
<comment type="interaction">
    <interactant intactId="EBI-1188472">
        <id>P78358</id>
    </interactant>
    <interactant intactId="EBI-12040603">
        <id>Q9NZC7-5</id>
        <label>WWOX</label>
    </interactant>
    <organismsDiffer>false</organismsDiffer>
    <experiments>3</experiments>
</comment>
<comment type="subcellular location">
    <subcellularLocation>
        <location evidence="2 3">Cytoplasm</location>
    </subcellularLocation>
</comment>
<comment type="alternative products">
    <event type="alternative splicing"/>
    <isoform>
        <id>P78358-1</id>
        <name>1</name>
        <sequence type="displayed"/>
    </isoform>
    <isoform>
        <id>P78358-2</id>
        <name>2</name>
        <sequence type="described" ref="VSP_028548"/>
    </isoform>
</comment>
<comment type="tissue specificity">
    <text evidence="2">Expressed in testis and ovary and in a wide variety of cancers. Detected in uterine myometrium. Expressed from 18 weeks until birth in human fetal testis. In the adult testis, is strongly expressed in spermatogonia and in primary spermatocytes, but not in post-meiotic cells or in testicular somatic cells (at protein level).</text>
</comment>
<comment type="similarity">
    <text evidence="5">Belongs to the CTAG/PCC1 family.</text>
</comment>
<sequence length="180" mass="17992">MQAEGRGTGGSTGDADGPGGPGIPDGPGGNAGGPGEAGATGGRGPRGAGAARASGPGGGAPRGPHGGAASGLNGCCRCGARGPESRLLEFYLAMPFATPMEAELARRSLAQDAPPLPVPGVLLKEFTVSGNILTIRLTAADHRQLQLSISSCLQQLSLLMWITQCFLPVFLAQPPSGQRR</sequence>
<feature type="chain" id="PRO_0000218922" description="Cancer/testis antigen 1">
    <location>
        <begin position="1"/>
        <end position="180"/>
    </location>
</feature>
<feature type="region of interest" description="Disordered" evidence="1">
    <location>
        <begin position="1"/>
        <end position="66"/>
    </location>
</feature>
<feature type="compositionally biased region" description="Gly residues" evidence="1">
    <location>
        <begin position="1"/>
        <end position="47"/>
    </location>
</feature>
<feature type="compositionally biased region" description="Gly residues" evidence="1">
    <location>
        <begin position="55"/>
        <end position="66"/>
    </location>
</feature>
<feature type="splice variant" id="VSP_028548" description="In isoform 2." evidence="4">
    <original>IRLTAADHRQLQLSISSCLQQLSLLMWITQCFLPVFLAQPPSGQRR</original>
    <variation>MSVQDQDRDGAWVGGGHSVAGWGLGSAYTPRSGC</variation>
    <location>
        <begin position="135"/>
        <end position="180"/>
    </location>
</feature>
<feature type="helix" evidence="6">
    <location>
        <begin position="64"/>
        <end position="66"/>
    </location>
</feature>
<feature type="turn" evidence="6">
    <location>
        <begin position="67"/>
        <end position="69"/>
    </location>
</feature>
<accession>P78358</accession>
<accession>A1L417</accession>
<accession>B7WNL9</accession>
<accession>Q7LBY4</accession>
<accession>Q9NY13</accession>
<reference key="1">
    <citation type="journal article" date="1997" name="Proc. Natl. Acad. Sci. U.S.A.">
        <title>A testicular antigen aberrantly expressed in human cancers detected by autologous antibody screening.</title>
        <authorList>
            <person name="Chen Y.-T."/>
            <person name="Scanlan M.J."/>
            <person name="Sahin U."/>
            <person name="Tuereci O."/>
            <person name="Gure A.O."/>
            <person name="Tsang S."/>
            <person name="Williamson B."/>
            <person name="Stockert E."/>
            <person name="Pfreundschuh M."/>
            <person name="Old L.J."/>
        </authorList>
    </citation>
    <scope>NUCLEOTIDE SEQUENCE [MRNA] (ISOFORM 1)</scope>
</reference>
<reference key="2">
    <citation type="journal article" date="1998" name="Int. J. Cancer">
        <title>LAGE-1, a new gene with tumor specificity.</title>
        <authorList>
            <person name="Lethe B.G."/>
            <person name="Lucas S."/>
            <person name="Michaux L."/>
            <person name="De Smet C."/>
            <person name="Godelaine D."/>
            <person name="Serrano A."/>
            <person name="De Plaen E."/>
            <person name="Boon T."/>
        </authorList>
    </citation>
    <scope>NUCLEOTIDE SEQUENCE [MRNA] (ISOFORM 1)</scope>
    <source>
        <tissue>Melanoma</tissue>
    </source>
</reference>
<reference key="3">
    <citation type="journal article" date="1998" name="J. Immunol.">
        <title>A breast and melanoma-shared tumor antigen: T cell responses to antigenic peptides translated from different open reading frames.</title>
        <authorList>
            <person name="Wang R.-F."/>
            <person name="Johnston S.L."/>
            <person name="Zeng G."/>
            <person name="Topalian S.L."/>
            <person name="Schwartzentruber D.J."/>
            <person name="Rosenberg S.A."/>
        </authorList>
    </citation>
    <scope>NUCLEOTIDE SEQUENCE [MRNA] (ISOFORM 1)</scope>
</reference>
<reference key="4">
    <citation type="journal article" date="1999" name="Mol. Cell. Biol.">
        <title>DNA methylation is the primary silencing mechanism for a set of germ line- and tumor-specific genes with a CpG-rich promoter.</title>
        <authorList>
            <person name="De Smet C."/>
            <person name="Lurquin C."/>
            <person name="Lethe B.G."/>
            <person name="Martelange V."/>
            <person name="Boon T."/>
        </authorList>
    </citation>
    <scope>NUCLEOTIDE SEQUENCE [GENOMIC DNA]</scope>
</reference>
<reference key="5">
    <citation type="journal article" date="2001" name="Hum. Mol. Genet.">
        <title>Multiple pathogenic and benign genomic rearrangements occur at a 35 kb duplication involving the NEMO and LAGE2 genes.</title>
        <authorList>
            <person name="Aradhya S."/>
            <person name="Bardaro T."/>
            <person name="Galgoczy P."/>
            <person name="Yamagata T."/>
            <person name="Esposito T."/>
            <person name="Patlan H."/>
            <person name="Ciccodicola A."/>
            <person name="Kenwrick S."/>
            <person name="Platzer M."/>
            <person name="D'Urso M."/>
            <person name="Nelson D.L."/>
        </authorList>
    </citation>
    <scope>NUCLEOTIDE SEQUENCE [GENOMIC DNA]</scope>
</reference>
<reference key="6">
    <citation type="journal article" date="2005" name="Nature">
        <title>The DNA sequence of the human X chromosome.</title>
        <authorList>
            <person name="Ross M.T."/>
            <person name="Grafham D.V."/>
            <person name="Coffey A.J."/>
            <person name="Scherer S."/>
            <person name="McLay K."/>
            <person name="Muzny D."/>
            <person name="Platzer M."/>
            <person name="Howell G.R."/>
            <person name="Burrows C."/>
            <person name="Bird C.P."/>
            <person name="Frankish A."/>
            <person name="Lovell F.L."/>
            <person name="Howe K.L."/>
            <person name="Ashurst J.L."/>
            <person name="Fulton R.S."/>
            <person name="Sudbrak R."/>
            <person name="Wen G."/>
            <person name="Jones M.C."/>
            <person name="Hurles M.E."/>
            <person name="Andrews T.D."/>
            <person name="Scott C.E."/>
            <person name="Searle S."/>
            <person name="Ramser J."/>
            <person name="Whittaker A."/>
            <person name="Deadman R."/>
            <person name="Carter N.P."/>
            <person name="Hunt S.E."/>
            <person name="Chen R."/>
            <person name="Cree A."/>
            <person name="Gunaratne P."/>
            <person name="Havlak P."/>
            <person name="Hodgson A."/>
            <person name="Metzker M.L."/>
            <person name="Richards S."/>
            <person name="Scott G."/>
            <person name="Steffen D."/>
            <person name="Sodergren E."/>
            <person name="Wheeler D.A."/>
            <person name="Worley K.C."/>
            <person name="Ainscough R."/>
            <person name="Ambrose K.D."/>
            <person name="Ansari-Lari M.A."/>
            <person name="Aradhya S."/>
            <person name="Ashwell R.I."/>
            <person name="Babbage A.K."/>
            <person name="Bagguley C.L."/>
            <person name="Ballabio A."/>
            <person name="Banerjee R."/>
            <person name="Barker G.E."/>
            <person name="Barlow K.F."/>
            <person name="Barrett I.P."/>
            <person name="Bates K.N."/>
            <person name="Beare D.M."/>
            <person name="Beasley H."/>
            <person name="Beasley O."/>
            <person name="Beck A."/>
            <person name="Bethel G."/>
            <person name="Blechschmidt K."/>
            <person name="Brady N."/>
            <person name="Bray-Allen S."/>
            <person name="Bridgeman A.M."/>
            <person name="Brown A.J."/>
            <person name="Brown M.J."/>
            <person name="Bonnin D."/>
            <person name="Bruford E.A."/>
            <person name="Buhay C."/>
            <person name="Burch P."/>
            <person name="Burford D."/>
            <person name="Burgess J."/>
            <person name="Burrill W."/>
            <person name="Burton J."/>
            <person name="Bye J.M."/>
            <person name="Carder C."/>
            <person name="Carrel L."/>
            <person name="Chako J."/>
            <person name="Chapman J.C."/>
            <person name="Chavez D."/>
            <person name="Chen E."/>
            <person name="Chen G."/>
            <person name="Chen Y."/>
            <person name="Chen Z."/>
            <person name="Chinault C."/>
            <person name="Ciccodicola A."/>
            <person name="Clark S.Y."/>
            <person name="Clarke G."/>
            <person name="Clee C.M."/>
            <person name="Clegg S."/>
            <person name="Clerc-Blankenburg K."/>
            <person name="Clifford K."/>
            <person name="Cobley V."/>
            <person name="Cole C.G."/>
            <person name="Conquer J.S."/>
            <person name="Corby N."/>
            <person name="Connor R.E."/>
            <person name="David R."/>
            <person name="Davies J."/>
            <person name="Davis C."/>
            <person name="Davis J."/>
            <person name="Delgado O."/>
            <person name="Deshazo D."/>
            <person name="Dhami P."/>
            <person name="Ding Y."/>
            <person name="Dinh H."/>
            <person name="Dodsworth S."/>
            <person name="Draper H."/>
            <person name="Dugan-Rocha S."/>
            <person name="Dunham A."/>
            <person name="Dunn M."/>
            <person name="Durbin K.J."/>
            <person name="Dutta I."/>
            <person name="Eades T."/>
            <person name="Ellwood M."/>
            <person name="Emery-Cohen A."/>
            <person name="Errington H."/>
            <person name="Evans K.L."/>
            <person name="Faulkner L."/>
            <person name="Francis F."/>
            <person name="Frankland J."/>
            <person name="Fraser A.E."/>
            <person name="Galgoczy P."/>
            <person name="Gilbert J."/>
            <person name="Gill R."/>
            <person name="Gloeckner G."/>
            <person name="Gregory S.G."/>
            <person name="Gribble S."/>
            <person name="Griffiths C."/>
            <person name="Grocock R."/>
            <person name="Gu Y."/>
            <person name="Gwilliam R."/>
            <person name="Hamilton C."/>
            <person name="Hart E.A."/>
            <person name="Hawes A."/>
            <person name="Heath P.D."/>
            <person name="Heitmann K."/>
            <person name="Hennig S."/>
            <person name="Hernandez J."/>
            <person name="Hinzmann B."/>
            <person name="Ho S."/>
            <person name="Hoffs M."/>
            <person name="Howden P.J."/>
            <person name="Huckle E.J."/>
            <person name="Hume J."/>
            <person name="Hunt P.J."/>
            <person name="Hunt A.R."/>
            <person name="Isherwood J."/>
            <person name="Jacob L."/>
            <person name="Johnson D."/>
            <person name="Jones S."/>
            <person name="de Jong P.J."/>
            <person name="Joseph S.S."/>
            <person name="Keenan S."/>
            <person name="Kelly S."/>
            <person name="Kershaw J.K."/>
            <person name="Khan Z."/>
            <person name="Kioschis P."/>
            <person name="Klages S."/>
            <person name="Knights A.J."/>
            <person name="Kosiura A."/>
            <person name="Kovar-Smith C."/>
            <person name="Laird G.K."/>
            <person name="Langford C."/>
            <person name="Lawlor S."/>
            <person name="Leversha M."/>
            <person name="Lewis L."/>
            <person name="Liu W."/>
            <person name="Lloyd C."/>
            <person name="Lloyd D.M."/>
            <person name="Loulseged H."/>
            <person name="Loveland J.E."/>
            <person name="Lovell J.D."/>
            <person name="Lozado R."/>
            <person name="Lu J."/>
            <person name="Lyne R."/>
            <person name="Ma J."/>
            <person name="Maheshwari M."/>
            <person name="Matthews L.H."/>
            <person name="McDowall J."/>
            <person name="McLaren S."/>
            <person name="McMurray A."/>
            <person name="Meidl P."/>
            <person name="Meitinger T."/>
            <person name="Milne S."/>
            <person name="Miner G."/>
            <person name="Mistry S.L."/>
            <person name="Morgan M."/>
            <person name="Morris S."/>
            <person name="Mueller I."/>
            <person name="Mullikin J.C."/>
            <person name="Nguyen N."/>
            <person name="Nordsiek G."/>
            <person name="Nyakatura G."/>
            <person name="O'dell C.N."/>
            <person name="Okwuonu G."/>
            <person name="Palmer S."/>
            <person name="Pandian R."/>
            <person name="Parker D."/>
            <person name="Parrish J."/>
            <person name="Pasternak S."/>
            <person name="Patel D."/>
            <person name="Pearce A.V."/>
            <person name="Pearson D.M."/>
            <person name="Pelan S.E."/>
            <person name="Perez L."/>
            <person name="Porter K.M."/>
            <person name="Ramsey Y."/>
            <person name="Reichwald K."/>
            <person name="Rhodes S."/>
            <person name="Ridler K.A."/>
            <person name="Schlessinger D."/>
            <person name="Schueler M.G."/>
            <person name="Sehra H.K."/>
            <person name="Shaw-Smith C."/>
            <person name="Shen H."/>
            <person name="Sheridan E.M."/>
            <person name="Shownkeen R."/>
            <person name="Skuce C.D."/>
            <person name="Smith M.L."/>
            <person name="Sotheran E.C."/>
            <person name="Steingruber H.E."/>
            <person name="Steward C.A."/>
            <person name="Storey R."/>
            <person name="Swann R.M."/>
            <person name="Swarbreck D."/>
            <person name="Tabor P.E."/>
            <person name="Taudien S."/>
            <person name="Taylor T."/>
            <person name="Teague B."/>
            <person name="Thomas K."/>
            <person name="Thorpe A."/>
            <person name="Timms K."/>
            <person name="Tracey A."/>
            <person name="Trevanion S."/>
            <person name="Tromans A.C."/>
            <person name="d'Urso M."/>
            <person name="Verduzco D."/>
            <person name="Villasana D."/>
            <person name="Waldron L."/>
            <person name="Wall M."/>
            <person name="Wang Q."/>
            <person name="Warren J."/>
            <person name="Warry G.L."/>
            <person name="Wei X."/>
            <person name="West A."/>
            <person name="Whitehead S.L."/>
            <person name="Whiteley M.N."/>
            <person name="Wilkinson J.E."/>
            <person name="Willey D.L."/>
            <person name="Williams G."/>
            <person name="Williams L."/>
            <person name="Williamson A."/>
            <person name="Williamson H."/>
            <person name="Wilming L."/>
            <person name="Woodmansey R.L."/>
            <person name="Wray P.W."/>
            <person name="Yen J."/>
            <person name="Zhang J."/>
            <person name="Zhou J."/>
            <person name="Zoghbi H."/>
            <person name="Zorilla S."/>
            <person name="Buck D."/>
            <person name="Reinhardt R."/>
            <person name="Poustka A."/>
            <person name="Rosenthal A."/>
            <person name="Lehrach H."/>
            <person name="Meindl A."/>
            <person name="Minx P.J."/>
            <person name="Hillier L.W."/>
            <person name="Willard H.F."/>
            <person name="Wilson R.K."/>
            <person name="Waterston R.H."/>
            <person name="Rice C.M."/>
            <person name="Vaudin M."/>
            <person name="Coulson A."/>
            <person name="Nelson D.L."/>
            <person name="Weinstock G."/>
            <person name="Sulston J.E."/>
            <person name="Durbin R.M."/>
            <person name="Hubbard T."/>
            <person name="Gibbs R.A."/>
            <person name="Beck S."/>
            <person name="Rogers J."/>
            <person name="Bentley D.R."/>
        </authorList>
    </citation>
    <scope>NUCLEOTIDE SEQUENCE [LARGE SCALE GENOMIC DNA]</scope>
</reference>
<reference key="7">
    <citation type="submission" date="2005-09" db="EMBL/GenBank/DDBJ databases">
        <authorList>
            <person name="Mural R.J."/>
            <person name="Istrail S."/>
            <person name="Sutton G.G."/>
            <person name="Florea L."/>
            <person name="Halpern A.L."/>
            <person name="Mobarry C.M."/>
            <person name="Lippert R."/>
            <person name="Walenz B."/>
            <person name="Shatkay H."/>
            <person name="Dew I."/>
            <person name="Miller J.R."/>
            <person name="Flanigan M.J."/>
            <person name="Edwards N.J."/>
            <person name="Bolanos R."/>
            <person name="Fasulo D."/>
            <person name="Halldorsson B.V."/>
            <person name="Hannenhalli S."/>
            <person name="Turner R."/>
            <person name="Yooseph S."/>
            <person name="Lu F."/>
            <person name="Nusskern D.R."/>
            <person name="Shue B.C."/>
            <person name="Zheng X.H."/>
            <person name="Zhong F."/>
            <person name="Delcher A.L."/>
            <person name="Huson D.H."/>
            <person name="Kravitz S.A."/>
            <person name="Mouchard L."/>
            <person name="Reinert K."/>
            <person name="Remington K.A."/>
            <person name="Clark A.G."/>
            <person name="Waterman M.S."/>
            <person name="Eichler E.E."/>
            <person name="Adams M.D."/>
            <person name="Hunkapiller M.W."/>
            <person name="Myers E.W."/>
            <person name="Venter J.C."/>
        </authorList>
    </citation>
    <scope>NUCLEOTIDE SEQUENCE [LARGE SCALE GENOMIC DNA]</scope>
</reference>
<reference key="8">
    <citation type="journal article" date="2004" name="Genome Res.">
        <title>The status, quality, and expansion of the NIH full-length cDNA project: the Mammalian Gene Collection (MGC).</title>
        <authorList>
            <consortium name="The MGC Project Team"/>
        </authorList>
    </citation>
    <scope>NUCLEOTIDE SEQUENCE [LARGE SCALE MRNA] (ISOFORM 1)</scope>
</reference>
<reference key="9">
    <citation type="submission" date="2000-03" db="EMBL/GenBank/DDBJ databases">
        <authorList>
            <person name="Lethe B.G."/>
        </authorList>
    </citation>
    <scope>NUCLEOTIDE SEQUENCE [MRNA] OF 27-180 (ISOFORM 2)</scope>
</reference>
<reference key="10">
    <citation type="journal article" date="2002" name="Lab. Invest.">
        <title>The cancer-testis gene, NY-ESO-1, is expressed in normal fetal and adult testes and in spermatocytic seminomas and testicular carcinoma in situ.</title>
        <authorList>
            <person name="Satie A.P."/>
            <person name="Rajpert-De Meyts E."/>
            <person name="Spagnoli G.C."/>
            <person name="Henno S."/>
            <person name="Olivo L."/>
            <person name="Jacobsen G.K."/>
            <person name="Rioux-Leclercq N."/>
            <person name="Jegou B."/>
            <person name="Samson M."/>
        </authorList>
    </citation>
    <scope>TISSUE SPECIFICITY</scope>
    <scope>SUBCELLULAR LOCATION</scope>
</reference>
<reference key="11">
    <citation type="journal article" date="2019" name="J. Proteome Res.">
        <title>Cell Type-Specific Expression of Testis Elevated Genes Based on Transcriptomics and Antibody-Based Proteomics.</title>
        <authorList>
            <person name="Pineau C."/>
            <person name="Hikmet F."/>
            <person name="Zhang C."/>
            <person name="Oksvold P."/>
            <person name="Chen S."/>
            <person name="Fagerberg L."/>
            <person name="Uhlen M."/>
            <person name="Lindskog C."/>
        </authorList>
    </citation>
    <scope>SUBCELLULAR LOCATION</scope>
</reference>
<reference key="12">
    <citation type="journal article" date="2005" name="J. Exp. Med.">
        <title>Structural and kinetic basis for heightened immunogenicity of T cell vaccines.</title>
        <authorList>
            <person name="Chen J.-L."/>
            <person name="Stewart-Jones G."/>
            <person name="Bossi G."/>
            <person name="Lissin N.M."/>
            <person name="Wooldridge L."/>
            <person name="Choi E.M.L."/>
            <person name="Held G."/>
            <person name="Dunbar P.R."/>
            <person name="Esnouf R.M."/>
            <person name="Sami M."/>
            <person name="Boulter J.M."/>
            <person name="Rizkallah P."/>
            <person name="Renner C."/>
            <person name="Sewell A."/>
            <person name="van der Merwe P.A."/>
            <person name="Jakobsen B.K."/>
            <person name="Griffiths G."/>
            <person name="Jones E.Y."/>
            <person name="Cerundolo V."/>
        </authorList>
    </citation>
    <scope>X-RAY CRYSTALLOGRAPHY (1.7 ANGSTROMS) OF 157-165 IN COMPLEX WITH T-CELL RECEPTOR</scope>
</reference>